<organism>
    <name type="scientific">Zygosaccharomyces rouxii (strain ATCC 2623 / CBS 732 / NBRC 1130 / NCYC 568 / NRRL Y-229)</name>
    <dbReference type="NCBI Taxonomy" id="559307"/>
    <lineage>
        <taxon>Eukaryota</taxon>
        <taxon>Fungi</taxon>
        <taxon>Dikarya</taxon>
        <taxon>Ascomycota</taxon>
        <taxon>Saccharomycotina</taxon>
        <taxon>Saccharomycetes</taxon>
        <taxon>Saccharomycetales</taxon>
        <taxon>Saccharomycetaceae</taxon>
        <taxon>Zygosaccharomyces</taxon>
    </lineage>
</organism>
<gene>
    <name type="primary">ERT1</name>
    <name type="ordered locus">ZYRO0G21582g</name>
</gene>
<feature type="chain" id="PRO_0000406477" description="Transcription activator of gluconeogenesis">
    <location>
        <begin position="1"/>
        <end position="512"/>
    </location>
</feature>
<feature type="domain" description="PAS" evidence="2">
    <location>
        <begin position="391"/>
        <end position="463"/>
    </location>
</feature>
<feature type="DNA-binding region" description="Zn(2)-C6 fungal-type">
    <location>
        <begin position="41"/>
        <end position="69"/>
    </location>
</feature>
<feature type="region of interest" description="Disordered" evidence="3">
    <location>
        <begin position="95"/>
        <end position="118"/>
    </location>
</feature>
<feature type="compositionally biased region" description="Polar residues" evidence="3">
    <location>
        <begin position="97"/>
        <end position="106"/>
    </location>
</feature>
<protein>
    <recommendedName>
        <fullName>Transcription activator of gluconeogenesis</fullName>
    </recommendedName>
</protein>
<evidence type="ECO:0000250" key="1"/>
<evidence type="ECO:0000255" key="2">
    <source>
        <dbReference type="PROSITE-ProRule" id="PRU00140"/>
    </source>
</evidence>
<evidence type="ECO:0000256" key="3">
    <source>
        <dbReference type="SAM" id="MobiDB-lite"/>
    </source>
</evidence>
<evidence type="ECO:0000305" key="4"/>
<comment type="function">
    <text evidence="1">Transcription factor which regulates nonfermentable carbon utilization. Activator of gluconeogenetic genes (By similarity).</text>
</comment>
<comment type="subcellular location">
    <subcellularLocation>
        <location evidence="1">Nucleus</location>
    </subcellularLocation>
</comment>
<comment type="similarity">
    <text evidence="4">Belongs to the ERT1/acuK family.</text>
</comment>
<dbReference type="EMBL" id="CU928179">
    <property type="protein sequence ID" value="CAR29983.1"/>
    <property type="molecule type" value="Genomic_DNA"/>
</dbReference>
<dbReference type="RefSeq" id="XP_002498916.1">
    <property type="nucleotide sequence ID" value="XM_002498871.1"/>
</dbReference>
<dbReference type="SMR" id="C5E1J9"/>
<dbReference type="FunCoup" id="C5E1J9">
    <property type="interactions" value="283"/>
</dbReference>
<dbReference type="GeneID" id="8206752"/>
<dbReference type="KEGG" id="zro:ZYRO0G21582g"/>
<dbReference type="HOGENOM" id="CLU_010748_2_3_1"/>
<dbReference type="InParanoid" id="C5E1J9"/>
<dbReference type="Proteomes" id="UP000008536">
    <property type="component" value="Chromosome G"/>
</dbReference>
<dbReference type="GO" id="GO:0005634">
    <property type="term" value="C:nucleus"/>
    <property type="evidence" value="ECO:0007669"/>
    <property type="project" value="UniProtKB-SubCell"/>
</dbReference>
<dbReference type="GO" id="GO:0000981">
    <property type="term" value="F:DNA-binding transcription factor activity, RNA polymerase II-specific"/>
    <property type="evidence" value="ECO:0007669"/>
    <property type="project" value="InterPro"/>
</dbReference>
<dbReference type="GO" id="GO:0000977">
    <property type="term" value="F:RNA polymerase II transcription regulatory region sequence-specific DNA binding"/>
    <property type="evidence" value="ECO:0007669"/>
    <property type="project" value="TreeGrafter"/>
</dbReference>
<dbReference type="GO" id="GO:0008270">
    <property type="term" value="F:zinc ion binding"/>
    <property type="evidence" value="ECO:0007669"/>
    <property type="project" value="InterPro"/>
</dbReference>
<dbReference type="GO" id="GO:0009267">
    <property type="term" value="P:cellular response to starvation"/>
    <property type="evidence" value="ECO:0007669"/>
    <property type="project" value="TreeGrafter"/>
</dbReference>
<dbReference type="GO" id="GO:0006094">
    <property type="term" value="P:gluconeogenesis"/>
    <property type="evidence" value="ECO:0007669"/>
    <property type="project" value="UniProtKB-KW"/>
</dbReference>
<dbReference type="CDD" id="cd00130">
    <property type="entry name" value="PAS"/>
    <property type="match status" value="1"/>
</dbReference>
<dbReference type="Gene3D" id="3.30.450.20">
    <property type="entry name" value="PAS domain"/>
    <property type="match status" value="1"/>
</dbReference>
<dbReference type="InterPro" id="IPR050335">
    <property type="entry name" value="ERT1_acuK_gluconeogen_tf"/>
</dbReference>
<dbReference type="InterPro" id="IPR000014">
    <property type="entry name" value="PAS"/>
</dbReference>
<dbReference type="InterPro" id="IPR035965">
    <property type="entry name" value="PAS-like_dom_sf"/>
</dbReference>
<dbReference type="InterPro" id="IPR056751">
    <property type="entry name" value="PAS_13"/>
</dbReference>
<dbReference type="InterPro" id="IPR036864">
    <property type="entry name" value="Zn2-C6_fun-type_DNA-bd_sf"/>
</dbReference>
<dbReference type="InterPro" id="IPR001138">
    <property type="entry name" value="Zn2Cys6_DnaBD"/>
</dbReference>
<dbReference type="NCBIfam" id="TIGR00229">
    <property type="entry name" value="sensory_box"/>
    <property type="match status" value="1"/>
</dbReference>
<dbReference type="PANTHER" id="PTHR47659:SF1">
    <property type="entry name" value="TRANSCRIPTION ACTIVATOR OF GLUCONEOGENESIS ERT1"/>
    <property type="match status" value="1"/>
</dbReference>
<dbReference type="PANTHER" id="PTHR47659">
    <property type="entry name" value="ZN(II)2CYS6 TRANSCRIPTION FACTOR (EUROFUNG)-RELATED"/>
    <property type="match status" value="1"/>
</dbReference>
<dbReference type="Pfam" id="PF24990">
    <property type="entry name" value="PAS_13"/>
    <property type="match status" value="2"/>
</dbReference>
<dbReference type="Pfam" id="PF00172">
    <property type="entry name" value="Zn_clus"/>
    <property type="match status" value="1"/>
</dbReference>
<dbReference type="SMART" id="SM00066">
    <property type="entry name" value="GAL4"/>
    <property type="match status" value="1"/>
</dbReference>
<dbReference type="SMART" id="SM00091">
    <property type="entry name" value="PAS"/>
    <property type="match status" value="1"/>
</dbReference>
<dbReference type="SUPFAM" id="SSF55785">
    <property type="entry name" value="PYP-like sensor domain (PAS domain)"/>
    <property type="match status" value="1"/>
</dbReference>
<dbReference type="SUPFAM" id="SSF57701">
    <property type="entry name" value="Zn2/Cys6 DNA-binding domain"/>
    <property type="match status" value="1"/>
</dbReference>
<dbReference type="PROSITE" id="PS50112">
    <property type="entry name" value="PAS"/>
    <property type="match status" value="1"/>
</dbReference>
<dbReference type="PROSITE" id="PS00463">
    <property type="entry name" value="ZN2_CY6_FUNGAL_1"/>
    <property type="match status" value="1"/>
</dbReference>
<name>ERT1_ZYGRC</name>
<reference key="1">
    <citation type="journal article" date="2009" name="Genome Res.">
        <title>Comparative genomics of protoploid Saccharomycetaceae.</title>
        <authorList>
            <consortium name="The Genolevures Consortium"/>
            <person name="Souciet J.-L."/>
            <person name="Dujon B."/>
            <person name="Gaillardin C."/>
            <person name="Johnston M."/>
            <person name="Baret P.V."/>
            <person name="Cliften P."/>
            <person name="Sherman D.J."/>
            <person name="Weissenbach J."/>
            <person name="Westhof E."/>
            <person name="Wincker P."/>
            <person name="Jubin C."/>
            <person name="Poulain J."/>
            <person name="Barbe V."/>
            <person name="Segurens B."/>
            <person name="Artiguenave F."/>
            <person name="Anthouard V."/>
            <person name="Vacherie B."/>
            <person name="Val M.-E."/>
            <person name="Fulton R.S."/>
            <person name="Minx P."/>
            <person name="Wilson R."/>
            <person name="Durrens P."/>
            <person name="Jean G."/>
            <person name="Marck C."/>
            <person name="Martin T."/>
            <person name="Nikolski M."/>
            <person name="Rolland T."/>
            <person name="Seret M.-L."/>
            <person name="Casaregola S."/>
            <person name="Despons L."/>
            <person name="Fairhead C."/>
            <person name="Fischer G."/>
            <person name="Lafontaine I."/>
            <person name="Leh V."/>
            <person name="Lemaire M."/>
            <person name="de Montigny J."/>
            <person name="Neuveglise C."/>
            <person name="Thierry A."/>
            <person name="Blanc-Lenfle I."/>
            <person name="Bleykasten C."/>
            <person name="Diffels J."/>
            <person name="Fritsch E."/>
            <person name="Frangeul L."/>
            <person name="Goeffon A."/>
            <person name="Jauniaux N."/>
            <person name="Kachouri-Lafond R."/>
            <person name="Payen C."/>
            <person name="Potier S."/>
            <person name="Pribylova L."/>
            <person name="Ozanne C."/>
            <person name="Richard G.-F."/>
            <person name="Sacerdot C."/>
            <person name="Straub M.-L."/>
            <person name="Talla E."/>
        </authorList>
    </citation>
    <scope>NUCLEOTIDE SEQUENCE [LARGE SCALE GENOMIC DNA]</scope>
    <source>
        <strain>ATCC 2623 / CBS 732 / BCRC 21506 / NBRC 1130 / NCYC 568 / NRRL Y-229</strain>
    </source>
</reference>
<proteinExistence type="inferred from homology"/>
<keyword id="KW-0010">Activator</keyword>
<keyword id="KW-0238">DNA-binding</keyword>
<keyword id="KW-0312">Gluconeogenesis</keyword>
<keyword id="KW-0479">Metal-binding</keyword>
<keyword id="KW-0539">Nucleus</keyword>
<keyword id="KW-1185">Reference proteome</keyword>
<keyword id="KW-0804">Transcription</keyword>
<keyword id="KW-0805">Transcription regulation</keyword>
<keyword id="KW-0862">Zinc</keyword>
<accession>C5E1J9</accession>
<sequence length="512" mass="57475">MGGGSGPSDEFANILPHFSQVDSSVPVSSGKKSRRNTHVACVNCSKWHVSCEAKRPCHRCVVKGLGSTCVDAPRKKSKYLAGIPDASLIRSVHRDNGSQANNSSPDNAGVSHHQEQQNFRDPQHIVHKSKFLSNAADSEYSILSHIINQDTLVNKIPIDLLYSGKPNDNDAEAAAAVAAKEAANVDLSSPKVDVGPSNTAMSSTDVYSMLLGPNSREIVASRIDLFQNHFPLTPVESQYHSLSFKRLPTQDRSGSPKFNASINQYYLNKEISMLPEVINAAMRQQRSVGDKSVSFALECVSPDAYQLSGNSEWRHSLRYSTSMEIYQLINEPFSHTTGFHHLYTYLRKRFNRKDLIEMSGCLAEFRPIFIACTASLTEQDMIFMEQCYQRTLLEYAKFIAQIGTPTCVWRRNGQISYVNEEFEILSGWNKEELLNKMTFIVEIMDDESVRDYFKTFAKVAYKDFRGSERMKTCNLLTPTRGQIIPCCCMWTLKRDVSGLPLMILGNFMPIIA</sequence>